<organism>
    <name type="scientific">Danio rerio</name>
    <name type="common">Zebrafish</name>
    <name type="synonym">Brachydanio rerio</name>
    <dbReference type="NCBI Taxonomy" id="7955"/>
    <lineage>
        <taxon>Eukaryota</taxon>
        <taxon>Metazoa</taxon>
        <taxon>Chordata</taxon>
        <taxon>Craniata</taxon>
        <taxon>Vertebrata</taxon>
        <taxon>Euteleostomi</taxon>
        <taxon>Actinopterygii</taxon>
        <taxon>Neopterygii</taxon>
        <taxon>Teleostei</taxon>
        <taxon>Ostariophysi</taxon>
        <taxon>Cypriniformes</taxon>
        <taxon>Danionidae</taxon>
        <taxon>Danioninae</taxon>
        <taxon>Danio</taxon>
    </lineage>
</organism>
<accession>Q7ZW86</accession>
<gene>
    <name type="primary">cwc27</name>
    <name type="synonym">sdccag10</name>
    <name type="ORF">zgc:56702</name>
</gene>
<protein>
    <recommendedName>
        <fullName evidence="5">Spliceosome-associated protein CWC27 homolog</fullName>
    </recommendedName>
    <alternativeName>
        <fullName evidence="1">Probable inactive peptidyl-prolyl cis-trans isomerase CWC27 homolog</fullName>
        <shortName evidence="1">PPIase CWC27</shortName>
    </alternativeName>
</protein>
<reference key="1">
    <citation type="submission" date="2003-03" db="EMBL/GenBank/DDBJ databases">
        <authorList>
            <consortium name="NIH - Zebrafish Gene Collection (ZGC) project"/>
        </authorList>
    </citation>
    <scope>NUCLEOTIDE SEQUENCE [LARGE SCALE MRNA]</scope>
</reference>
<keyword id="KW-0175">Coiled coil</keyword>
<keyword id="KW-0539">Nucleus</keyword>
<keyword id="KW-1185">Reference proteome</keyword>
<proteinExistence type="evidence at transcript level"/>
<name>CWC27_DANRE</name>
<comment type="function">
    <text evidence="1">As part of the spliceosome, plays a role in pre-mRNA splicing. Probable inactive PPIase with no peptidyl-prolyl cis-trans isomerase activity.</text>
</comment>
<comment type="subunit">
    <text evidence="1">Part of the activated spliceosome B/catalytic step 1 spliceosome, one of the forms of the spliceosome which has a well-formed active site but still cannot catalyze the branching reaction and is composed at least of 52 proteins, the U2, U5 and U6 snRNAs and the pre-mRNA. Recruited during early steps of activated spliceosome B maturation, it is probably one of the first proteins released from this complex as he matures to the spliceosome C complex. Component of the minor spliceosome, which splices U12-type introns (By similarity).</text>
</comment>
<comment type="subcellular location">
    <subcellularLocation>
        <location evidence="1">Nucleus</location>
    </subcellularLocation>
</comment>
<comment type="similarity">
    <text evidence="5">Belongs to the cyclophilin-type PPIase family.</text>
</comment>
<comment type="caution">
    <text evidence="1">Despite the fact that it belongs to the cyclophilin-type PPIase family, it has probably no peptidyl-prolyl cis-trans isomerase activity.</text>
</comment>
<feature type="chain" id="PRO_0000313652" description="Spliceosome-associated protein CWC27 homolog">
    <location>
        <begin position="1"/>
        <end position="470"/>
    </location>
</feature>
<feature type="domain" description="PPIase cyclophilin-type" evidence="3">
    <location>
        <begin position="11"/>
        <end position="166"/>
    </location>
</feature>
<feature type="region of interest" description="Disordered" evidence="4">
    <location>
        <begin position="172"/>
        <end position="377"/>
    </location>
</feature>
<feature type="region of interest" description="Disordered" evidence="4">
    <location>
        <begin position="428"/>
        <end position="470"/>
    </location>
</feature>
<feature type="coiled-coil region" evidence="2">
    <location>
        <begin position="281"/>
        <end position="332"/>
    </location>
</feature>
<feature type="compositionally biased region" description="Basic and acidic residues" evidence="4">
    <location>
        <begin position="172"/>
        <end position="192"/>
    </location>
</feature>
<feature type="compositionally biased region" description="Basic and acidic residues" evidence="4">
    <location>
        <begin position="230"/>
        <end position="240"/>
    </location>
</feature>
<feature type="compositionally biased region" description="Acidic residues" evidence="4">
    <location>
        <begin position="254"/>
        <end position="272"/>
    </location>
</feature>
<feature type="compositionally biased region" description="Basic and acidic residues" evidence="4">
    <location>
        <begin position="273"/>
        <end position="337"/>
    </location>
</feature>
<feature type="compositionally biased region" description="Basic and acidic residues" evidence="4">
    <location>
        <begin position="356"/>
        <end position="367"/>
    </location>
</feature>
<sequence>MSNIYIQEPPTNGKVLLKTSAGDIDIELWSKETPKACRNFVQLCMEGYYDGTIFHRMVPEFIVQGGDPTGTGTGGESIYGRPFKDEFHSRLRFNRRGLVAMANAGPHDNGSQFFFTLGRADELNNKHTIFGKVTGDTVYNMLRLADVACDGDERPLNPHKIRSTEVLHSPFDDIIPREIKGKKEKNKDEAKKSQSKATKNFSLLSFGEEAEEDEEMVNQVSQTMKGKSKSSHDLLKDDPKLSSVPVVDRNQGEGDFEDSDDDEDDAEDDSDREAEKAKVRENIAKKLKKDKTDEEKSSQDLVKKTSRSDELRKEARQLKKELLAIKQRKEDGVKKEEDVSEVGDSKQNSEAVTEYLESRKKYDDMRKQKLKKGSGREAQTLALLESFKSKLSSAISETPSAPEEDVEELAEDDDKGWMAHVLHFDEQSRKVKDANMQDEDTFEIYDPRNPVNKRRREESKKLLKDKKARR</sequence>
<dbReference type="EMBL" id="BC049533">
    <property type="protein sequence ID" value="AAH49533.1"/>
    <property type="molecule type" value="mRNA"/>
</dbReference>
<dbReference type="RefSeq" id="NP_957397.1">
    <property type="nucleotide sequence ID" value="NM_201103.1"/>
</dbReference>
<dbReference type="SMR" id="Q7ZW86"/>
<dbReference type="FunCoup" id="Q7ZW86">
    <property type="interactions" value="1133"/>
</dbReference>
<dbReference type="STRING" id="7955.ENSDARP00000064209"/>
<dbReference type="PaxDb" id="7955-ENSDARP00000064209"/>
<dbReference type="GeneID" id="394078"/>
<dbReference type="KEGG" id="dre:394078"/>
<dbReference type="AGR" id="ZFIN:ZDB-GENE-040426-1118"/>
<dbReference type="CTD" id="10283"/>
<dbReference type="ZFIN" id="ZDB-GENE-040426-1118">
    <property type="gene designation" value="cwc27"/>
</dbReference>
<dbReference type="eggNOG" id="KOG0865">
    <property type="taxonomic scope" value="Eukaryota"/>
</dbReference>
<dbReference type="eggNOG" id="KOG0885">
    <property type="taxonomic scope" value="Eukaryota"/>
</dbReference>
<dbReference type="InParanoid" id="Q7ZW86"/>
<dbReference type="OrthoDB" id="442970at2759"/>
<dbReference type="PhylomeDB" id="Q7ZW86"/>
<dbReference type="PRO" id="PR:Q7ZW86"/>
<dbReference type="Proteomes" id="UP000000437">
    <property type="component" value="Chromosome 10"/>
</dbReference>
<dbReference type="GO" id="GO:0071013">
    <property type="term" value="C:catalytic step 2 spliceosome"/>
    <property type="evidence" value="ECO:0000318"/>
    <property type="project" value="GO_Central"/>
</dbReference>
<dbReference type="GO" id="GO:0071005">
    <property type="term" value="C:U2-type precatalytic spliceosome"/>
    <property type="evidence" value="ECO:0000250"/>
    <property type="project" value="UniProtKB"/>
</dbReference>
<dbReference type="GO" id="GO:0003755">
    <property type="term" value="F:peptidyl-prolyl cis-trans isomerase activity"/>
    <property type="evidence" value="ECO:0007669"/>
    <property type="project" value="InterPro"/>
</dbReference>
<dbReference type="GO" id="GO:0006457">
    <property type="term" value="P:protein folding"/>
    <property type="evidence" value="ECO:0000318"/>
    <property type="project" value="GO_Central"/>
</dbReference>
<dbReference type="CDD" id="cd22288">
    <property type="entry name" value="CWC27_CTD"/>
    <property type="match status" value="1"/>
</dbReference>
<dbReference type="CDD" id="cd01925">
    <property type="entry name" value="cyclophilin_CeCYP16-like"/>
    <property type="match status" value="1"/>
</dbReference>
<dbReference type="FunFam" id="2.40.100.10:FF:000007">
    <property type="entry name" value="Peptidyl-prolyl cis-trans isomerase CWC27 homolog"/>
    <property type="match status" value="1"/>
</dbReference>
<dbReference type="Gene3D" id="2.40.100.10">
    <property type="entry name" value="Cyclophilin-like"/>
    <property type="match status" value="1"/>
</dbReference>
<dbReference type="InterPro" id="IPR029000">
    <property type="entry name" value="Cyclophilin-like_dom_sf"/>
</dbReference>
<dbReference type="InterPro" id="IPR020892">
    <property type="entry name" value="Cyclophilin-type_PPIase_CS"/>
</dbReference>
<dbReference type="InterPro" id="IPR002130">
    <property type="entry name" value="Cyclophilin-type_PPIase_dom"/>
</dbReference>
<dbReference type="InterPro" id="IPR044666">
    <property type="entry name" value="Cyclophilin_A-like"/>
</dbReference>
<dbReference type="PANTHER" id="PTHR45625">
    <property type="entry name" value="PEPTIDYL-PROLYL CIS-TRANS ISOMERASE-RELATED"/>
    <property type="match status" value="1"/>
</dbReference>
<dbReference type="PANTHER" id="PTHR45625:SF6">
    <property type="entry name" value="SPLICEOSOME-ASSOCIATED PROTEIN CWC27 HOMOLOG"/>
    <property type="match status" value="1"/>
</dbReference>
<dbReference type="Pfam" id="PF00160">
    <property type="entry name" value="Pro_isomerase"/>
    <property type="match status" value="1"/>
</dbReference>
<dbReference type="PRINTS" id="PR00153">
    <property type="entry name" value="CSAPPISMRASE"/>
</dbReference>
<dbReference type="SUPFAM" id="SSF50891">
    <property type="entry name" value="Cyclophilin-like"/>
    <property type="match status" value="1"/>
</dbReference>
<dbReference type="PROSITE" id="PS00170">
    <property type="entry name" value="CSA_PPIASE_1"/>
    <property type="match status" value="1"/>
</dbReference>
<dbReference type="PROSITE" id="PS50072">
    <property type="entry name" value="CSA_PPIASE_2"/>
    <property type="match status" value="1"/>
</dbReference>
<evidence type="ECO:0000250" key="1">
    <source>
        <dbReference type="UniProtKB" id="Q6UX04"/>
    </source>
</evidence>
<evidence type="ECO:0000255" key="2"/>
<evidence type="ECO:0000255" key="3">
    <source>
        <dbReference type="PROSITE-ProRule" id="PRU00156"/>
    </source>
</evidence>
<evidence type="ECO:0000256" key="4">
    <source>
        <dbReference type="SAM" id="MobiDB-lite"/>
    </source>
</evidence>
<evidence type="ECO:0000305" key="5"/>